<dbReference type="EC" id="4.2.1.33" evidence="1"/>
<dbReference type="EMBL" id="CP000016">
    <property type="protein sequence ID" value="AAZ40774.1"/>
    <property type="molecule type" value="Genomic_DNA"/>
</dbReference>
<dbReference type="RefSeq" id="WP_011282681.1">
    <property type="nucleotide sequence ID" value="NC_007292.1"/>
</dbReference>
<dbReference type="SMR" id="Q493R3"/>
<dbReference type="STRING" id="291272.BPEN_134"/>
<dbReference type="KEGG" id="bpn:BPEN_134"/>
<dbReference type="eggNOG" id="COG0066">
    <property type="taxonomic scope" value="Bacteria"/>
</dbReference>
<dbReference type="HOGENOM" id="CLU_081378_0_3_6"/>
<dbReference type="OrthoDB" id="9777465at2"/>
<dbReference type="UniPathway" id="UPA00048">
    <property type="reaction ID" value="UER00071"/>
</dbReference>
<dbReference type="Proteomes" id="UP000007794">
    <property type="component" value="Chromosome"/>
</dbReference>
<dbReference type="GO" id="GO:0009316">
    <property type="term" value="C:3-isopropylmalate dehydratase complex"/>
    <property type="evidence" value="ECO:0007669"/>
    <property type="project" value="InterPro"/>
</dbReference>
<dbReference type="GO" id="GO:0003861">
    <property type="term" value="F:3-isopropylmalate dehydratase activity"/>
    <property type="evidence" value="ECO:0007669"/>
    <property type="project" value="UniProtKB-UniRule"/>
</dbReference>
<dbReference type="GO" id="GO:0009098">
    <property type="term" value="P:L-leucine biosynthetic process"/>
    <property type="evidence" value="ECO:0007669"/>
    <property type="project" value="UniProtKB-UniRule"/>
</dbReference>
<dbReference type="CDD" id="cd01577">
    <property type="entry name" value="IPMI_Swivel"/>
    <property type="match status" value="1"/>
</dbReference>
<dbReference type="FunFam" id="3.20.19.10:FF:000003">
    <property type="entry name" value="3-isopropylmalate dehydratase small subunit"/>
    <property type="match status" value="1"/>
</dbReference>
<dbReference type="Gene3D" id="3.20.19.10">
    <property type="entry name" value="Aconitase, domain 4"/>
    <property type="match status" value="1"/>
</dbReference>
<dbReference type="HAMAP" id="MF_01031">
    <property type="entry name" value="LeuD_type1"/>
    <property type="match status" value="1"/>
</dbReference>
<dbReference type="InterPro" id="IPR004431">
    <property type="entry name" value="3-IsopropMal_deHydase_ssu"/>
</dbReference>
<dbReference type="InterPro" id="IPR015928">
    <property type="entry name" value="Aconitase/3IPM_dehydase_swvl"/>
</dbReference>
<dbReference type="InterPro" id="IPR000573">
    <property type="entry name" value="AconitaseA/IPMdHydase_ssu_swvl"/>
</dbReference>
<dbReference type="InterPro" id="IPR033940">
    <property type="entry name" value="IPMI_Swivel"/>
</dbReference>
<dbReference type="InterPro" id="IPR050075">
    <property type="entry name" value="LeuD"/>
</dbReference>
<dbReference type="NCBIfam" id="TIGR00171">
    <property type="entry name" value="leuD"/>
    <property type="match status" value="1"/>
</dbReference>
<dbReference type="NCBIfam" id="NF002458">
    <property type="entry name" value="PRK01641.1"/>
    <property type="match status" value="1"/>
</dbReference>
<dbReference type="PANTHER" id="PTHR43345:SF5">
    <property type="entry name" value="3-ISOPROPYLMALATE DEHYDRATASE SMALL SUBUNIT"/>
    <property type="match status" value="1"/>
</dbReference>
<dbReference type="PANTHER" id="PTHR43345">
    <property type="entry name" value="3-ISOPROPYLMALATE DEHYDRATASE SMALL SUBUNIT 2-RELATED-RELATED"/>
    <property type="match status" value="1"/>
</dbReference>
<dbReference type="Pfam" id="PF00694">
    <property type="entry name" value="Aconitase_C"/>
    <property type="match status" value="1"/>
</dbReference>
<dbReference type="SUPFAM" id="SSF52016">
    <property type="entry name" value="LeuD/IlvD-like"/>
    <property type="match status" value="1"/>
</dbReference>
<comment type="function">
    <text evidence="1">Catalyzes the isomerization between 2-isopropylmalate and 3-isopropylmalate, via the formation of 2-isopropylmaleate.</text>
</comment>
<comment type="catalytic activity">
    <reaction evidence="1">
        <text>(2R,3S)-3-isopropylmalate = (2S)-2-isopropylmalate</text>
        <dbReference type="Rhea" id="RHEA:32287"/>
        <dbReference type="ChEBI" id="CHEBI:1178"/>
        <dbReference type="ChEBI" id="CHEBI:35121"/>
        <dbReference type="EC" id="4.2.1.33"/>
    </reaction>
</comment>
<comment type="pathway">
    <text evidence="1">Amino-acid biosynthesis; L-leucine biosynthesis; L-leucine from 3-methyl-2-oxobutanoate: step 2/4.</text>
</comment>
<comment type="subunit">
    <text evidence="1">Heterodimer of LeuC and LeuD.</text>
</comment>
<comment type="similarity">
    <text evidence="1">Belongs to the LeuD family. LeuD type 1 subfamily.</text>
</comment>
<gene>
    <name evidence="1" type="primary">leuD</name>
    <name type="ordered locus">BPEN_134</name>
</gene>
<protein>
    <recommendedName>
        <fullName evidence="1">3-isopropylmalate dehydratase small subunit</fullName>
        <ecNumber evidence="1">4.2.1.33</ecNumber>
    </recommendedName>
    <alternativeName>
        <fullName evidence="1">Alpha-IPM isomerase</fullName>
        <shortName evidence="1">IPMI</shortName>
    </alternativeName>
    <alternativeName>
        <fullName evidence="1">Isopropylmalate isomerase</fullName>
    </alternativeName>
</protein>
<organism>
    <name type="scientific">Blochmanniella pennsylvanica (strain BPEN)</name>
    <dbReference type="NCBI Taxonomy" id="291272"/>
    <lineage>
        <taxon>Bacteria</taxon>
        <taxon>Pseudomonadati</taxon>
        <taxon>Pseudomonadota</taxon>
        <taxon>Gammaproteobacteria</taxon>
        <taxon>Enterobacterales</taxon>
        <taxon>Enterobacteriaceae</taxon>
        <taxon>ant endosymbionts</taxon>
        <taxon>Candidatus Blochmanniella</taxon>
    </lineage>
</organism>
<sequence>MIQFIQHTGIVLPLDISDIDTDTIIPKQFLKATTRSNFGLYLFFNWRFLENTPKILNPNFVLNDPYYKHASILLTQRNFGCGSSREHAVWALMDYGFKVIIAPSFADIFHKNSFNNRLLLITLSELKINDLFKEIATQKKGISFTVNLHEQIIYVHNKKKCFFEINDFHKRCMLNNIDNISLTLQYDVAIKKYENNQPSYLK</sequence>
<reference key="1">
    <citation type="journal article" date="2005" name="Genome Res.">
        <title>Genome sequence of Blochmannia pennsylvanicus indicates parallel evolutionary trends among bacterial mutualists of insects.</title>
        <authorList>
            <person name="Degnan P.H."/>
            <person name="Lazarus A.B."/>
            <person name="Wernegreen J.J."/>
        </authorList>
    </citation>
    <scope>NUCLEOTIDE SEQUENCE [LARGE SCALE GENOMIC DNA]</scope>
    <source>
        <strain>BPEN</strain>
    </source>
</reference>
<accession>Q493R3</accession>
<keyword id="KW-0028">Amino-acid biosynthesis</keyword>
<keyword id="KW-0100">Branched-chain amino acid biosynthesis</keyword>
<keyword id="KW-0432">Leucine biosynthesis</keyword>
<keyword id="KW-0456">Lyase</keyword>
<keyword id="KW-1185">Reference proteome</keyword>
<feature type="chain" id="PRO_0000141787" description="3-isopropylmalate dehydratase small subunit">
    <location>
        <begin position="1"/>
        <end position="202"/>
    </location>
</feature>
<proteinExistence type="inferred from homology"/>
<name>LEUD_BLOPB</name>
<evidence type="ECO:0000255" key="1">
    <source>
        <dbReference type="HAMAP-Rule" id="MF_01031"/>
    </source>
</evidence>